<proteinExistence type="inferred from homology"/>
<dbReference type="EC" id="2.3.1.117" evidence="1"/>
<dbReference type="EMBL" id="CP000970">
    <property type="protein sequence ID" value="ACB18768.1"/>
    <property type="molecule type" value="Genomic_DNA"/>
</dbReference>
<dbReference type="RefSeq" id="WP_001186652.1">
    <property type="nucleotide sequence ID" value="NC_010498.1"/>
</dbReference>
<dbReference type="SMR" id="B1LGW7"/>
<dbReference type="KEGG" id="ecm:EcSMS35_0176"/>
<dbReference type="HOGENOM" id="CLU_050859_0_1_6"/>
<dbReference type="UniPathway" id="UPA00034">
    <property type="reaction ID" value="UER00019"/>
</dbReference>
<dbReference type="Proteomes" id="UP000007011">
    <property type="component" value="Chromosome"/>
</dbReference>
<dbReference type="GO" id="GO:0005737">
    <property type="term" value="C:cytoplasm"/>
    <property type="evidence" value="ECO:0007669"/>
    <property type="project" value="UniProtKB-SubCell"/>
</dbReference>
<dbReference type="GO" id="GO:0008666">
    <property type="term" value="F:2,3,4,5-tetrahydropyridine-2,6-dicarboxylate N-succinyltransferase activity"/>
    <property type="evidence" value="ECO:0007669"/>
    <property type="project" value="UniProtKB-UniRule"/>
</dbReference>
<dbReference type="GO" id="GO:0016779">
    <property type="term" value="F:nucleotidyltransferase activity"/>
    <property type="evidence" value="ECO:0007669"/>
    <property type="project" value="TreeGrafter"/>
</dbReference>
<dbReference type="GO" id="GO:0019877">
    <property type="term" value="P:diaminopimelate biosynthetic process"/>
    <property type="evidence" value="ECO:0007669"/>
    <property type="project" value="UniProtKB-UniRule"/>
</dbReference>
<dbReference type="GO" id="GO:0009089">
    <property type="term" value="P:lysine biosynthetic process via diaminopimelate"/>
    <property type="evidence" value="ECO:0007669"/>
    <property type="project" value="UniProtKB-UniRule"/>
</dbReference>
<dbReference type="CDD" id="cd03350">
    <property type="entry name" value="LbH_THP_succinylT"/>
    <property type="match status" value="1"/>
</dbReference>
<dbReference type="FunFam" id="1.10.166.10:FF:000001">
    <property type="entry name" value="2,3,4,5-tetrahydropyridine-2,6-dicarboxylate N-succinyltransferase"/>
    <property type="match status" value="1"/>
</dbReference>
<dbReference type="FunFam" id="2.160.10.10:FF:000004">
    <property type="entry name" value="2,3,4,5-tetrahydropyridine-2,6-dicarboxylate N-succinyltransferase"/>
    <property type="match status" value="1"/>
</dbReference>
<dbReference type="Gene3D" id="2.160.10.10">
    <property type="entry name" value="Hexapeptide repeat proteins"/>
    <property type="match status" value="1"/>
</dbReference>
<dbReference type="Gene3D" id="1.10.166.10">
    <property type="entry name" value="Tetrahydrodipicolinate-N-succinyltransferase, N-terminal domain"/>
    <property type="match status" value="1"/>
</dbReference>
<dbReference type="HAMAP" id="MF_00811">
    <property type="entry name" value="DapD"/>
    <property type="match status" value="1"/>
</dbReference>
<dbReference type="InterPro" id="IPR005664">
    <property type="entry name" value="DapD_Trfase_Hexpep_rpt_fam"/>
</dbReference>
<dbReference type="InterPro" id="IPR001451">
    <property type="entry name" value="Hexapep"/>
</dbReference>
<dbReference type="InterPro" id="IPR018357">
    <property type="entry name" value="Hexapep_transf_CS"/>
</dbReference>
<dbReference type="InterPro" id="IPR023180">
    <property type="entry name" value="THP_succinylTrfase_dom1"/>
</dbReference>
<dbReference type="InterPro" id="IPR037133">
    <property type="entry name" value="THP_succinylTrfase_N_sf"/>
</dbReference>
<dbReference type="InterPro" id="IPR011004">
    <property type="entry name" value="Trimer_LpxA-like_sf"/>
</dbReference>
<dbReference type="NCBIfam" id="TIGR00965">
    <property type="entry name" value="dapD"/>
    <property type="match status" value="1"/>
</dbReference>
<dbReference type="NCBIfam" id="NF008808">
    <property type="entry name" value="PRK11830.1"/>
    <property type="match status" value="1"/>
</dbReference>
<dbReference type="PANTHER" id="PTHR19136:SF52">
    <property type="entry name" value="2,3,4,5-TETRAHYDROPYRIDINE-2,6-DICARBOXYLATE N-SUCCINYLTRANSFERASE"/>
    <property type="match status" value="1"/>
</dbReference>
<dbReference type="PANTHER" id="PTHR19136">
    <property type="entry name" value="MOLYBDENUM COFACTOR GUANYLYLTRANSFERASE"/>
    <property type="match status" value="1"/>
</dbReference>
<dbReference type="Pfam" id="PF14602">
    <property type="entry name" value="Hexapep_2"/>
    <property type="match status" value="1"/>
</dbReference>
<dbReference type="Pfam" id="PF14805">
    <property type="entry name" value="THDPS_N_2"/>
    <property type="match status" value="1"/>
</dbReference>
<dbReference type="SUPFAM" id="SSF51161">
    <property type="entry name" value="Trimeric LpxA-like enzymes"/>
    <property type="match status" value="1"/>
</dbReference>
<dbReference type="PROSITE" id="PS00101">
    <property type="entry name" value="HEXAPEP_TRANSFERASES"/>
    <property type="match status" value="1"/>
</dbReference>
<accession>B1LGW7</accession>
<comment type="catalytic activity">
    <reaction evidence="1">
        <text>(S)-2,3,4,5-tetrahydrodipicolinate + succinyl-CoA + H2O = (S)-2-succinylamino-6-oxoheptanedioate + CoA</text>
        <dbReference type="Rhea" id="RHEA:17325"/>
        <dbReference type="ChEBI" id="CHEBI:15377"/>
        <dbReference type="ChEBI" id="CHEBI:15685"/>
        <dbReference type="ChEBI" id="CHEBI:16845"/>
        <dbReference type="ChEBI" id="CHEBI:57287"/>
        <dbReference type="ChEBI" id="CHEBI:57292"/>
        <dbReference type="EC" id="2.3.1.117"/>
    </reaction>
</comment>
<comment type="pathway">
    <text evidence="1">Amino-acid biosynthesis; L-lysine biosynthesis via DAP pathway; LL-2,6-diaminopimelate from (S)-tetrahydrodipicolinate (succinylase route): step 1/3.</text>
</comment>
<comment type="subcellular location">
    <subcellularLocation>
        <location evidence="1">Cytoplasm</location>
    </subcellularLocation>
</comment>
<comment type="similarity">
    <text evidence="1">Belongs to the transferase hexapeptide repeat family.</text>
</comment>
<evidence type="ECO:0000255" key="1">
    <source>
        <dbReference type="HAMAP-Rule" id="MF_00811"/>
    </source>
</evidence>
<reference key="1">
    <citation type="journal article" date="2008" name="J. Bacteriol.">
        <title>Insights into the environmental resistance gene pool from the genome sequence of the multidrug-resistant environmental isolate Escherichia coli SMS-3-5.</title>
        <authorList>
            <person name="Fricke W.F."/>
            <person name="Wright M.S."/>
            <person name="Lindell A.H."/>
            <person name="Harkins D.M."/>
            <person name="Baker-Austin C."/>
            <person name="Ravel J."/>
            <person name="Stepanauskas R."/>
        </authorList>
    </citation>
    <scope>NUCLEOTIDE SEQUENCE [LARGE SCALE GENOMIC DNA]</scope>
    <source>
        <strain>SMS-3-5 / SECEC</strain>
    </source>
</reference>
<name>DAPD_ECOSM</name>
<organism>
    <name type="scientific">Escherichia coli (strain SMS-3-5 / SECEC)</name>
    <dbReference type="NCBI Taxonomy" id="439855"/>
    <lineage>
        <taxon>Bacteria</taxon>
        <taxon>Pseudomonadati</taxon>
        <taxon>Pseudomonadota</taxon>
        <taxon>Gammaproteobacteria</taxon>
        <taxon>Enterobacterales</taxon>
        <taxon>Enterobacteriaceae</taxon>
        <taxon>Escherichia</taxon>
    </lineage>
</organism>
<keyword id="KW-0012">Acyltransferase</keyword>
<keyword id="KW-0028">Amino-acid biosynthesis</keyword>
<keyword id="KW-0963">Cytoplasm</keyword>
<keyword id="KW-0220">Diaminopimelate biosynthesis</keyword>
<keyword id="KW-0457">Lysine biosynthesis</keyword>
<keyword id="KW-0677">Repeat</keyword>
<keyword id="KW-0808">Transferase</keyword>
<sequence>MQQLQNIIETAFERRAEITPANADTVTREAVNQVIALLDSGALRVAEKIDGQWVTHQWLKKAVLLSFRINDNQVIEGAESRYFDKVPMKFANYDAARFQKEGFRVVPPAAVRQGAFIARNTVLMPSYVNIGAYVDEGTMVDTWATVGSCAQIGKNVHLSGGVGIGGVLEPLQANPTIIEDNCFIGARSEVVEGVIVEEGSVISMGVYIGQSTRIYDRETGEIHYGRVPAGSVVVSGNLPSKDGKYSLYCAVIVKKVDAKTRGKVGINELLRTID</sequence>
<gene>
    <name evidence="1" type="primary">dapD</name>
    <name type="ordered locus">EcSMS35_0176</name>
</gene>
<protein>
    <recommendedName>
        <fullName evidence="1">2,3,4,5-tetrahydropyridine-2,6-dicarboxylate N-succinyltransferase</fullName>
        <ecNumber evidence="1">2.3.1.117</ecNumber>
    </recommendedName>
    <alternativeName>
        <fullName evidence="1">Tetrahydrodipicolinate N-succinyltransferase</fullName>
        <shortName evidence="1">THP succinyltransferase</shortName>
        <shortName evidence="1">Tetrahydropicolinate succinylase</shortName>
    </alternativeName>
</protein>
<feature type="chain" id="PRO_1000134048" description="2,3,4,5-tetrahydropyridine-2,6-dicarboxylate N-succinyltransferase">
    <location>
        <begin position="1"/>
        <end position="274"/>
    </location>
</feature>